<proteinExistence type="evidence at protein level"/>
<accession>Q96AC6</accession>
<accession>E9PHB2</accession>
<accession>Q96NN6</accession>
<sequence>MYAFYSLLIYIFYSLFRRDGGAAAAAEPGDPAQRARKPRGRRRPDLPAPELWTELTGLAASSEPEDGSEGAAEGRAAAVSLEEALLRLAEFLSVQLGAEESCGGPADLGQSGEVPSLLTVTSQLLALLAWLRSPRGRQALLQGTQPAPRVRPPSPDGSTSQEESPSHFTAVPGEPLGDETQGQQPLQLEEDQRAWQRLEQLILGQLEELKQQLEQQEEELGRLRLGVGATDSEKRVQHLTLENEALKQSLSLMRDLLLHWGPGPPIRAPQEEAEALLELQGRLQEAQDTTEALRAQLGVQEVQLQGLQGALQQLQQETEQNCRRELQQMHGQLAGLRARMASLRQGCGDLRGLVSTFTQSCQGSLSEARGQVSWALGALSSGGPGTQLPEGQQGPPAGCPGRLPELKGNIRVLCRLRPGTSSSLVSVEPGPGGTVTTCYRGRHRRFRLDWVFPPDASQEEVFRELEPAVLSCLRGYSVCIFTYGQTGTGKTYSMEGPPEDPGIVPRALQSLFREMGAGRQHRVTLSMVEIYNEAVRDLLAPGPPERLAVRQGPEGQGGIQVAGLTHWDVPNLETLHQMLKLGRSNRATAATAMNQRSSRSHALVTLTLRAASPPRAPGTAGTLHLVDLAGSERARKAGAAGPPRGDPDGARRLREAQTINRSLLALGGVMAALRAHRPHVPFRDSQLTRLLQPALGPGTTAVLLLQVGAGAGQVCACRSPPTRARPPAPLARRSPRGRRISGRQSAPSSSPTEWVKWSWGQPGAAGSRAPPGRLLPSAPTLRSPGPPAPLRRPLAVLHAPVPTTARARLSRPQRACPSSPGSRPCPWGLRPGLCWQRR</sequence>
<dbReference type="EMBL" id="AK055045">
    <property type="protein sequence ID" value="BAB70844.1"/>
    <property type="molecule type" value="mRNA"/>
</dbReference>
<dbReference type="EMBL" id="AC084125">
    <property type="status" value="NOT_ANNOTATED_CDS"/>
    <property type="molecule type" value="Genomic_DNA"/>
</dbReference>
<dbReference type="EMBL" id="CH471162">
    <property type="protein sequence ID" value="EAW82085.1"/>
    <property type="molecule type" value="Genomic_DNA"/>
</dbReference>
<dbReference type="EMBL" id="BC017311">
    <property type="protein sequence ID" value="AAH17311.1"/>
    <property type="molecule type" value="mRNA"/>
</dbReference>
<dbReference type="CCDS" id="CCDS6427.1">
    <molecule id="Q96AC6-1"/>
</dbReference>
<dbReference type="RefSeq" id="NP_665697.1">
    <molecule id="Q96AC6-1"/>
    <property type="nucleotide sequence ID" value="NM_145754.5"/>
</dbReference>
<dbReference type="SMR" id="Q96AC6"/>
<dbReference type="BioGRID" id="124785">
    <property type="interactions" value="6"/>
</dbReference>
<dbReference type="FunCoup" id="Q96AC6">
    <property type="interactions" value="188"/>
</dbReference>
<dbReference type="IntAct" id="Q96AC6">
    <property type="interactions" value="10"/>
</dbReference>
<dbReference type="MINT" id="Q96AC6"/>
<dbReference type="STRING" id="9606.ENSP00000301332"/>
<dbReference type="iPTMnet" id="Q96AC6"/>
<dbReference type="PhosphoSitePlus" id="Q96AC6"/>
<dbReference type="BioMuta" id="KIFC2"/>
<dbReference type="DMDM" id="34098674"/>
<dbReference type="jPOST" id="Q96AC6"/>
<dbReference type="MassIVE" id="Q96AC6"/>
<dbReference type="PaxDb" id="9606-ENSP00000301332"/>
<dbReference type="PeptideAtlas" id="Q96AC6"/>
<dbReference type="ProteomicsDB" id="75953">
    <molecule id="Q96AC6-1"/>
</dbReference>
<dbReference type="ProteomicsDB" id="77539"/>
<dbReference type="Antibodypedia" id="14932">
    <property type="antibodies" value="68 antibodies from 19 providers"/>
</dbReference>
<dbReference type="DNASU" id="90990"/>
<dbReference type="Ensembl" id="ENST00000301332.3">
    <molecule id="Q96AC6-1"/>
    <property type="protein sequence ID" value="ENSP00000301332.2"/>
    <property type="gene ID" value="ENSG00000167702.13"/>
</dbReference>
<dbReference type="GeneID" id="90990"/>
<dbReference type="KEGG" id="hsa:90990"/>
<dbReference type="UCSC" id="uc003zcz.4">
    <molecule id="Q96AC6-1"/>
    <property type="organism name" value="human"/>
</dbReference>
<dbReference type="AGR" id="HGNC:29530"/>
<dbReference type="CTD" id="90990"/>
<dbReference type="DisGeNET" id="90990"/>
<dbReference type="GeneCards" id="KIFC2"/>
<dbReference type="HGNC" id="HGNC:29530">
    <property type="gene designation" value="KIFC2"/>
</dbReference>
<dbReference type="HPA" id="ENSG00000167702">
    <property type="expression patterns" value="Tissue enhanced (brain)"/>
</dbReference>
<dbReference type="MIM" id="615216">
    <property type="type" value="gene"/>
</dbReference>
<dbReference type="neXtProt" id="NX_Q96AC6"/>
<dbReference type="OpenTargets" id="ENSG00000167702"/>
<dbReference type="PharmGKB" id="PA134874212"/>
<dbReference type="VEuPathDB" id="HostDB:ENSG00000167702"/>
<dbReference type="eggNOG" id="KOG0239">
    <property type="taxonomic scope" value="Eukaryota"/>
</dbReference>
<dbReference type="GeneTree" id="ENSGT00940000154022"/>
<dbReference type="HOGENOM" id="CLU_001485_12_6_1"/>
<dbReference type="InParanoid" id="Q96AC6"/>
<dbReference type="OrthoDB" id="3176171at2759"/>
<dbReference type="PAN-GO" id="Q96AC6">
    <property type="GO annotations" value="10 GO annotations based on evolutionary models"/>
</dbReference>
<dbReference type="PhylomeDB" id="Q96AC6"/>
<dbReference type="TreeFam" id="TF105238"/>
<dbReference type="PathwayCommons" id="Q96AC6"/>
<dbReference type="Reactome" id="R-HSA-6811434">
    <property type="pathway name" value="COPI-dependent Golgi-to-ER retrograde traffic"/>
</dbReference>
<dbReference type="Reactome" id="R-HSA-983189">
    <property type="pathway name" value="Kinesins"/>
</dbReference>
<dbReference type="SignaLink" id="Q96AC6"/>
<dbReference type="BioGRID-ORCS" id="90990">
    <property type="hits" value="124 hits in 1159 CRISPR screens"/>
</dbReference>
<dbReference type="ChiTaRS" id="KIFC2">
    <property type="organism name" value="human"/>
</dbReference>
<dbReference type="GenomeRNAi" id="90990"/>
<dbReference type="Pharos" id="Q96AC6">
    <property type="development level" value="Tbio"/>
</dbReference>
<dbReference type="PRO" id="PR:Q96AC6"/>
<dbReference type="Proteomes" id="UP000005640">
    <property type="component" value="Chromosome 8"/>
</dbReference>
<dbReference type="RNAct" id="Q96AC6">
    <property type="molecule type" value="protein"/>
</dbReference>
<dbReference type="Bgee" id="ENSG00000167702">
    <property type="expression patterns" value="Expressed in right hemisphere of cerebellum and 163 other cell types or tissues"/>
</dbReference>
<dbReference type="ExpressionAtlas" id="Q96AC6">
    <property type="expression patterns" value="baseline and differential"/>
</dbReference>
<dbReference type="GO" id="GO:0005737">
    <property type="term" value="C:cytoplasm"/>
    <property type="evidence" value="ECO:0000318"/>
    <property type="project" value="GO_Central"/>
</dbReference>
<dbReference type="GO" id="GO:0032839">
    <property type="term" value="C:dendrite cytoplasm"/>
    <property type="evidence" value="ECO:0007669"/>
    <property type="project" value="GOC"/>
</dbReference>
<dbReference type="GO" id="GO:0005871">
    <property type="term" value="C:kinesin complex"/>
    <property type="evidence" value="ECO:0000318"/>
    <property type="project" value="GO_Central"/>
</dbReference>
<dbReference type="GO" id="GO:0005874">
    <property type="term" value="C:microtubule"/>
    <property type="evidence" value="ECO:0000318"/>
    <property type="project" value="GO_Central"/>
</dbReference>
<dbReference type="GO" id="GO:0005524">
    <property type="term" value="F:ATP binding"/>
    <property type="evidence" value="ECO:0007669"/>
    <property type="project" value="UniProtKB-KW"/>
</dbReference>
<dbReference type="GO" id="GO:0016887">
    <property type="term" value="F:ATP hydrolysis activity"/>
    <property type="evidence" value="ECO:0000318"/>
    <property type="project" value="GO_Central"/>
</dbReference>
<dbReference type="GO" id="GO:0008017">
    <property type="term" value="F:microtubule binding"/>
    <property type="evidence" value="ECO:0000318"/>
    <property type="project" value="GO_Central"/>
</dbReference>
<dbReference type="GO" id="GO:0008574">
    <property type="term" value="F:plus-end-directed microtubule motor activity"/>
    <property type="evidence" value="ECO:0000318"/>
    <property type="project" value="GO_Central"/>
</dbReference>
<dbReference type="GO" id="GO:0098971">
    <property type="term" value="P:anterograde dendritic transport of neurotransmitter receptor complex"/>
    <property type="evidence" value="ECO:0000318"/>
    <property type="project" value="GO_Central"/>
</dbReference>
<dbReference type="GO" id="GO:0007411">
    <property type="term" value="P:axon guidance"/>
    <property type="evidence" value="ECO:0000318"/>
    <property type="project" value="GO_Central"/>
</dbReference>
<dbReference type="GO" id="GO:0048489">
    <property type="term" value="P:synaptic vesicle transport"/>
    <property type="evidence" value="ECO:0000318"/>
    <property type="project" value="GO_Central"/>
</dbReference>
<dbReference type="FunFam" id="3.40.850.10:FF:000066">
    <property type="entry name" value="Kinesin-like protein"/>
    <property type="match status" value="1"/>
</dbReference>
<dbReference type="Gene3D" id="3.40.850.10">
    <property type="entry name" value="Kinesin motor domain"/>
    <property type="match status" value="1"/>
</dbReference>
<dbReference type="InterPro" id="IPR027640">
    <property type="entry name" value="Kinesin-like_fam"/>
</dbReference>
<dbReference type="InterPro" id="IPR019821">
    <property type="entry name" value="Kinesin_motor_CS"/>
</dbReference>
<dbReference type="InterPro" id="IPR001752">
    <property type="entry name" value="Kinesin_motor_dom"/>
</dbReference>
<dbReference type="InterPro" id="IPR036961">
    <property type="entry name" value="Kinesin_motor_dom_sf"/>
</dbReference>
<dbReference type="InterPro" id="IPR027417">
    <property type="entry name" value="P-loop_NTPase"/>
</dbReference>
<dbReference type="PANTHER" id="PTHR47972:SF5">
    <property type="entry name" value="KINESIN-LIKE PROTEIN KIFC3"/>
    <property type="match status" value="1"/>
</dbReference>
<dbReference type="PANTHER" id="PTHR47972">
    <property type="entry name" value="KINESIN-LIKE PROTEIN KLP-3"/>
    <property type="match status" value="1"/>
</dbReference>
<dbReference type="Pfam" id="PF00225">
    <property type="entry name" value="Kinesin"/>
    <property type="match status" value="1"/>
</dbReference>
<dbReference type="PRINTS" id="PR00380">
    <property type="entry name" value="KINESINHEAVY"/>
</dbReference>
<dbReference type="SMART" id="SM00129">
    <property type="entry name" value="KISc"/>
    <property type="match status" value="1"/>
</dbReference>
<dbReference type="SUPFAM" id="SSF52540">
    <property type="entry name" value="P-loop containing nucleoside triphosphate hydrolases"/>
    <property type="match status" value="1"/>
</dbReference>
<dbReference type="PROSITE" id="PS00411">
    <property type="entry name" value="KINESIN_MOTOR_1"/>
    <property type="match status" value="1"/>
</dbReference>
<dbReference type="PROSITE" id="PS50067">
    <property type="entry name" value="KINESIN_MOTOR_2"/>
    <property type="match status" value="1"/>
</dbReference>
<protein>
    <recommendedName>
        <fullName>Kinesin-like protein KIFC2</fullName>
    </recommendedName>
</protein>
<organism>
    <name type="scientific">Homo sapiens</name>
    <name type="common">Human</name>
    <dbReference type="NCBI Taxonomy" id="9606"/>
    <lineage>
        <taxon>Eukaryota</taxon>
        <taxon>Metazoa</taxon>
        <taxon>Chordata</taxon>
        <taxon>Craniata</taxon>
        <taxon>Vertebrata</taxon>
        <taxon>Euteleostomi</taxon>
        <taxon>Mammalia</taxon>
        <taxon>Eutheria</taxon>
        <taxon>Euarchontoglires</taxon>
        <taxon>Primates</taxon>
        <taxon>Haplorrhini</taxon>
        <taxon>Catarrhini</taxon>
        <taxon>Hominidae</taxon>
        <taxon>Homo</taxon>
    </lineage>
</organism>
<feature type="chain" id="PRO_0000125429" description="Kinesin-like protein KIFC2">
    <location>
        <begin position="1"/>
        <end position="838"/>
    </location>
</feature>
<feature type="domain" description="Kinesin motor" evidence="3">
    <location>
        <begin position="409"/>
        <end position="740"/>
    </location>
</feature>
<feature type="region of interest" description="Disordered" evidence="4">
    <location>
        <begin position="23"/>
        <end position="48"/>
    </location>
</feature>
<feature type="region of interest" description="Disordered" evidence="4">
    <location>
        <begin position="140"/>
        <end position="185"/>
    </location>
</feature>
<feature type="region of interest" description="Disordered" evidence="4">
    <location>
        <begin position="718"/>
        <end position="792"/>
    </location>
</feature>
<feature type="coiled-coil region" evidence="2">
    <location>
        <begin position="186"/>
        <end position="351"/>
    </location>
</feature>
<feature type="compositionally biased region" description="Low complexity" evidence="4">
    <location>
        <begin position="23"/>
        <end position="32"/>
    </location>
</feature>
<feature type="compositionally biased region" description="Polar residues" evidence="4">
    <location>
        <begin position="156"/>
        <end position="167"/>
    </location>
</feature>
<feature type="binding site" evidence="3">
    <location>
        <begin position="484"/>
        <end position="491"/>
    </location>
    <ligand>
        <name>ATP</name>
        <dbReference type="ChEBI" id="CHEBI:30616"/>
    </ligand>
</feature>
<feature type="splice variant" id="VSP_056102" description="In isoform 2." evidence="5">
    <location>
        <begin position="1"/>
        <end position="252"/>
    </location>
</feature>
<feature type="splice variant" id="VSP_056103" description="In isoform 2." evidence="5">
    <original>VTLSMVEIYNEAVRDLLAPGPPERLAVRQ</original>
    <variation>RYHGRCLSPAESPEHPRPGLPPCRARSPL</variation>
    <location>
        <begin position="523"/>
        <end position="551"/>
    </location>
</feature>
<feature type="splice variant" id="VSP_056104" description="In isoform 2." evidence="5">
    <location>
        <begin position="552"/>
        <end position="838"/>
    </location>
</feature>
<feature type="sequence variant" id="VAR_049684" description="In dbSNP:rs35817880.">
    <original>G</original>
    <variation>E</variation>
    <location>
        <position position="67"/>
    </location>
</feature>
<feature type="sequence variant" id="VAR_049685" description="In dbSNP:rs12675537.">
    <original>S</original>
    <variation>F</variation>
    <location>
        <position position="166"/>
    </location>
</feature>
<name>KIFC2_HUMAN</name>
<comment type="function">
    <text evidence="1">May play a role in microtubule-dependent retrograde axonal transport. May function as the motor for the transport of multivesicular body (MVB)-like organelles in dendrites (By similarity).</text>
</comment>
<comment type="subcellular location">
    <subcellularLocation>
        <location evidence="6">Cytoplasm</location>
        <location evidence="6">Cytoskeleton</location>
    </subcellularLocation>
</comment>
<comment type="alternative products">
    <event type="alternative splicing"/>
    <isoform>
        <id>Q96AC6-1</id>
        <name>1</name>
        <sequence type="displayed"/>
    </isoform>
    <isoform>
        <id>Q96AC6-2</id>
        <name>2</name>
        <sequence type="described" ref="VSP_056102 VSP_056103 VSP_056104"/>
    </isoform>
</comment>
<comment type="similarity">
    <text evidence="3">Belongs to the TRAFAC class myosin-kinesin ATPase superfamily. Kinesin family.</text>
</comment>
<reference key="1">
    <citation type="journal article" date="2004" name="Nat. Genet.">
        <title>Complete sequencing and characterization of 21,243 full-length human cDNAs.</title>
        <authorList>
            <person name="Ota T."/>
            <person name="Suzuki Y."/>
            <person name="Nishikawa T."/>
            <person name="Otsuki T."/>
            <person name="Sugiyama T."/>
            <person name="Irie R."/>
            <person name="Wakamatsu A."/>
            <person name="Hayashi K."/>
            <person name="Sato H."/>
            <person name="Nagai K."/>
            <person name="Kimura K."/>
            <person name="Makita H."/>
            <person name="Sekine M."/>
            <person name="Obayashi M."/>
            <person name="Nishi T."/>
            <person name="Shibahara T."/>
            <person name="Tanaka T."/>
            <person name="Ishii S."/>
            <person name="Yamamoto J."/>
            <person name="Saito K."/>
            <person name="Kawai Y."/>
            <person name="Isono Y."/>
            <person name="Nakamura Y."/>
            <person name="Nagahari K."/>
            <person name="Murakami K."/>
            <person name="Yasuda T."/>
            <person name="Iwayanagi T."/>
            <person name="Wagatsuma M."/>
            <person name="Shiratori A."/>
            <person name="Sudo H."/>
            <person name="Hosoiri T."/>
            <person name="Kaku Y."/>
            <person name="Kodaira H."/>
            <person name="Kondo H."/>
            <person name="Sugawara M."/>
            <person name="Takahashi M."/>
            <person name="Kanda K."/>
            <person name="Yokoi T."/>
            <person name="Furuya T."/>
            <person name="Kikkawa E."/>
            <person name="Omura Y."/>
            <person name="Abe K."/>
            <person name="Kamihara K."/>
            <person name="Katsuta N."/>
            <person name="Sato K."/>
            <person name="Tanikawa M."/>
            <person name="Yamazaki M."/>
            <person name="Ninomiya K."/>
            <person name="Ishibashi T."/>
            <person name="Yamashita H."/>
            <person name="Murakawa K."/>
            <person name="Fujimori K."/>
            <person name="Tanai H."/>
            <person name="Kimata M."/>
            <person name="Watanabe M."/>
            <person name="Hiraoka S."/>
            <person name="Chiba Y."/>
            <person name="Ishida S."/>
            <person name="Ono Y."/>
            <person name="Takiguchi S."/>
            <person name="Watanabe S."/>
            <person name="Yosida M."/>
            <person name="Hotuta T."/>
            <person name="Kusano J."/>
            <person name="Kanehori K."/>
            <person name="Takahashi-Fujii A."/>
            <person name="Hara H."/>
            <person name="Tanase T.-O."/>
            <person name="Nomura Y."/>
            <person name="Togiya S."/>
            <person name="Komai F."/>
            <person name="Hara R."/>
            <person name="Takeuchi K."/>
            <person name="Arita M."/>
            <person name="Imose N."/>
            <person name="Musashino K."/>
            <person name="Yuuki H."/>
            <person name="Oshima A."/>
            <person name="Sasaki N."/>
            <person name="Aotsuka S."/>
            <person name="Yoshikawa Y."/>
            <person name="Matsunawa H."/>
            <person name="Ichihara T."/>
            <person name="Shiohata N."/>
            <person name="Sano S."/>
            <person name="Moriya S."/>
            <person name="Momiyama H."/>
            <person name="Satoh N."/>
            <person name="Takami S."/>
            <person name="Terashima Y."/>
            <person name="Suzuki O."/>
            <person name="Nakagawa S."/>
            <person name="Senoh A."/>
            <person name="Mizoguchi H."/>
            <person name="Goto Y."/>
            <person name="Shimizu F."/>
            <person name="Wakebe H."/>
            <person name="Hishigaki H."/>
            <person name="Watanabe T."/>
            <person name="Sugiyama A."/>
            <person name="Takemoto M."/>
            <person name="Kawakami B."/>
            <person name="Yamazaki M."/>
            <person name="Watanabe K."/>
            <person name="Kumagai A."/>
            <person name="Itakura S."/>
            <person name="Fukuzumi Y."/>
            <person name="Fujimori Y."/>
            <person name="Komiyama M."/>
            <person name="Tashiro H."/>
            <person name="Tanigami A."/>
            <person name="Fujiwara T."/>
            <person name="Ono T."/>
            <person name="Yamada K."/>
            <person name="Fujii Y."/>
            <person name="Ozaki K."/>
            <person name="Hirao M."/>
            <person name="Ohmori Y."/>
            <person name="Kawabata A."/>
            <person name="Hikiji T."/>
            <person name="Kobatake N."/>
            <person name="Inagaki H."/>
            <person name="Ikema Y."/>
            <person name="Okamoto S."/>
            <person name="Okitani R."/>
            <person name="Kawakami T."/>
            <person name="Noguchi S."/>
            <person name="Itoh T."/>
            <person name="Shigeta K."/>
            <person name="Senba T."/>
            <person name="Matsumura K."/>
            <person name="Nakajima Y."/>
            <person name="Mizuno T."/>
            <person name="Morinaga M."/>
            <person name="Sasaki M."/>
            <person name="Togashi T."/>
            <person name="Oyama M."/>
            <person name="Hata H."/>
            <person name="Watanabe M."/>
            <person name="Komatsu T."/>
            <person name="Mizushima-Sugano J."/>
            <person name="Satoh T."/>
            <person name="Shirai Y."/>
            <person name="Takahashi Y."/>
            <person name="Nakagawa K."/>
            <person name="Okumura K."/>
            <person name="Nagase T."/>
            <person name="Nomura N."/>
            <person name="Kikuchi H."/>
            <person name="Masuho Y."/>
            <person name="Yamashita R."/>
            <person name="Nakai K."/>
            <person name="Yada T."/>
            <person name="Nakamura Y."/>
            <person name="Ohara O."/>
            <person name="Isogai T."/>
            <person name="Sugano S."/>
        </authorList>
    </citation>
    <scope>NUCLEOTIDE SEQUENCE [LARGE SCALE MRNA] (ISOFORM 2)</scope>
    <source>
        <tissue>Brain</tissue>
    </source>
</reference>
<reference key="2">
    <citation type="journal article" date="2006" name="Nature">
        <title>DNA sequence and analysis of human chromosome 8.</title>
        <authorList>
            <person name="Nusbaum C."/>
            <person name="Mikkelsen T.S."/>
            <person name="Zody M.C."/>
            <person name="Asakawa S."/>
            <person name="Taudien S."/>
            <person name="Garber M."/>
            <person name="Kodira C.D."/>
            <person name="Schueler M.G."/>
            <person name="Shimizu A."/>
            <person name="Whittaker C.A."/>
            <person name="Chang J.L."/>
            <person name="Cuomo C.A."/>
            <person name="Dewar K."/>
            <person name="FitzGerald M.G."/>
            <person name="Yang X."/>
            <person name="Allen N.R."/>
            <person name="Anderson S."/>
            <person name="Asakawa T."/>
            <person name="Blechschmidt K."/>
            <person name="Bloom T."/>
            <person name="Borowsky M.L."/>
            <person name="Butler J."/>
            <person name="Cook A."/>
            <person name="Corum B."/>
            <person name="DeArellano K."/>
            <person name="DeCaprio D."/>
            <person name="Dooley K.T."/>
            <person name="Dorris L. III"/>
            <person name="Engels R."/>
            <person name="Gloeckner G."/>
            <person name="Hafez N."/>
            <person name="Hagopian D.S."/>
            <person name="Hall J.L."/>
            <person name="Ishikawa S.K."/>
            <person name="Jaffe D.B."/>
            <person name="Kamat A."/>
            <person name="Kudoh J."/>
            <person name="Lehmann R."/>
            <person name="Lokitsang T."/>
            <person name="Macdonald P."/>
            <person name="Major J.E."/>
            <person name="Matthews C.D."/>
            <person name="Mauceli E."/>
            <person name="Menzel U."/>
            <person name="Mihalev A.H."/>
            <person name="Minoshima S."/>
            <person name="Murayama Y."/>
            <person name="Naylor J.W."/>
            <person name="Nicol R."/>
            <person name="Nguyen C."/>
            <person name="O'Leary S.B."/>
            <person name="O'Neill K."/>
            <person name="Parker S.C.J."/>
            <person name="Polley A."/>
            <person name="Raymond C.K."/>
            <person name="Reichwald K."/>
            <person name="Rodriguez J."/>
            <person name="Sasaki T."/>
            <person name="Schilhabel M."/>
            <person name="Siddiqui R."/>
            <person name="Smith C.L."/>
            <person name="Sneddon T.P."/>
            <person name="Talamas J.A."/>
            <person name="Tenzin P."/>
            <person name="Topham K."/>
            <person name="Venkataraman V."/>
            <person name="Wen G."/>
            <person name="Yamazaki S."/>
            <person name="Young S.K."/>
            <person name="Zeng Q."/>
            <person name="Zimmer A.R."/>
            <person name="Rosenthal A."/>
            <person name="Birren B.W."/>
            <person name="Platzer M."/>
            <person name="Shimizu N."/>
            <person name="Lander E.S."/>
        </authorList>
    </citation>
    <scope>NUCLEOTIDE SEQUENCE [LARGE SCALE GENOMIC DNA]</scope>
</reference>
<reference key="3">
    <citation type="submission" date="2005-09" db="EMBL/GenBank/DDBJ databases">
        <authorList>
            <person name="Mural R.J."/>
            <person name="Istrail S."/>
            <person name="Sutton G."/>
            <person name="Florea L."/>
            <person name="Halpern A.L."/>
            <person name="Mobarry C.M."/>
            <person name="Lippert R."/>
            <person name="Walenz B."/>
            <person name="Shatkay H."/>
            <person name="Dew I."/>
            <person name="Miller J.R."/>
            <person name="Flanigan M.J."/>
            <person name="Edwards N.J."/>
            <person name="Bolanos R."/>
            <person name="Fasulo D."/>
            <person name="Halldorsson B.V."/>
            <person name="Hannenhalli S."/>
            <person name="Turner R."/>
            <person name="Yooseph S."/>
            <person name="Lu F."/>
            <person name="Nusskern D.R."/>
            <person name="Shue B.C."/>
            <person name="Zheng X.H."/>
            <person name="Zhong F."/>
            <person name="Delcher A.L."/>
            <person name="Huson D.H."/>
            <person name="Kravitz S.A."/>
            <person name="Mouchard L."/>
            <person name="Reinert K."/>
            <person name="Remington K.A."/>
            <person name="Clark A.G."/>
            <person name="Waterman M.S."/>
            <person name="Eichler E.E."/>
            <person name="Adams M.D."/>
            <person name="Hunkapiller M.W."/>
            <person name="Myers E.W."/>
            <person name="Venter J.C."/>
        </authorList>
    </citation>
    <scope>NUCLEOTIDE SEQUENCE [LARGE SCALE GENOMIC DNA]</scope>
</reference>
<reference key="4">
    <citation type="journal article" date="2004" name="Genome Res.">
        <title>The status, quality, and expansion of the NIH full-length cDNA project: the Mammalian Gene Collection (MGC).</title>
        <authorList>
            <consortium name="The MGC Project Team"/>
        </authorList>
    </citation>
    <scope>NUCLEOTIDE SEQUENCE [LARGE SCALE MRNA] (ISOFORM 1)</scope>
    <source>
        <tissue>Pancreas</tissue>
    </source>
</reference>
<evidence type="ECO:0000250" key="1"/>
<evidence type="ECO:0000255" key="2"/>
<evidence type="ECO:0000255" key="3">
    <source>
        <dbReference type="PROSITE-ProRule" id="PRU00283"/>
    </source>
</evidence>
<evidence type="ECO:0000256" key="4">
    <source>
        <dbReference type="SAM" id="MobiDB-lite"/>
    </source>
</evidence>
<evidence type="ECO:0000303" key="5">
    <source>
    </source>
</evidence>
<evidence type="ECO:0000305" key="6"/>
<keyword id="KW-0025">Alternative splicing</keyword>
<keyword id="KW-0067">ATP-binding</keyword>
<keyword id="KW-0175">Coiled coil</keyword>
<keyword id="KW-0963">Cytoplasm</keyword>
<keyword id="KW-0206">Cytoskeleton</keyword>
<keyword id="KW-0493">Microtubule</keyword>
<keyword id="KW-0505">Motor protein</keyword>
<keyword id="KW-0547">Nucleotide-binding</keyword>
<keyword id="KW-1267">Proteomics identification</keyword>
<keyword id="KW-1185">Reference proteome</keyword>
<gene>
    <name type="primary">KIFC2</name>
</gene>